<protein>
    <recommendedName>
        <fullName>GMP synthase [glutamine-hydrolyzing]</fullName>
        <ecNumber>6.3.5.2</ecNumber>
    </recommendedName>
    <alternativeName>
        <fullName>GMP synthetase</fullName>
    </alternativeName>
    <alternativeName>
        <fullName>Glutamine amidotransferase</fullName>
    </alternativeName>
</protein>
<sequence length="525" mass="56060">MVQPADIDVPETPARPVLVVDFGAQYAQLIARRVREARVFSEVIPHTASIEEIRARQPVALVLSGGPASVYADGAPKLDPALLDLGVPVLGICYGFQAMAQALGGIVAHTGTREYGRTELKVLGGKLHSDLPEVQPVWMSHGDAVTAAPDGFDVVASSAGAPVAAFEAFDRRLAGVQYHPEVMHTPHGQQVLSRFLHDFAGLGAQWTPANIANALIEQVRTQIGDGHAICGLSGGVDSAVAAALVQRAIGDRLTCVFVDHGLLRAGERAQVQRDFVAATGANLVTVDAAETFLEALSGVSAPEGKRKIIGRQFIRAFEGAVRDVLDGKTAEFLVQGTLYPDVVESGGGSGTANIKSHHNVGGLPDDLKFTLVEPLRLLFKDEVRAVGRELGLPEEIVARQPFPGPGLGIRIVGEVTAKRLDTLRHADSIVREELTAAGLDNQIWQCPVVLLADVRSVGVQGDGRTYGHPIVLRPVSSEDAMTADWTRVPYEVLERISTRITNEVAEVNRVVLDITSKPPATIEWE</sequence>
<dbReference type="EC" id="6.3.5.2"/>
<dbReference type="EMBL" id="AL123456">
    <property type="protein sequence ID" value="CCP46218.1"/>
    <property type="molecule type" value="Genomic_DNA"/>
</dbReference>
<dbReference type="PIR" id="A70735">
    <property type="entry name" value="A70735"/>
</dbReference>
<dbReference type="RefSeq" id="NP_217913.1">
    <property type="nucleotide sequence ID" value="NC_000962.3"/>
</dbReference>
<dbReference type="RefSeq" id="WP_003417952.1">
    <property type="nucleotide sequence ID" value="NZ_NVQJ01000027.1"/>
</dbReference>
<dbReference type="SMR" id="P9WMS7"/>
<dbReference type="FunCoup" id="P9WMS7">
    <property type="interactions" value="519"/>
</dbReference>
<dbReference type="STRING" id="83332.Rv3396c"/>
<dbReference type="MEROPS" id="C26.A07"/>
<dbReference type="iPTMnet" id="P9WMS7"/>
<dbReference type="PaxDb" id="83332-Rv3396c"/>
<dbReference type="DNASU" id="887412"/>
<dbReference type="GeneID" id="45427392"/>
<dbReference type="GeneID" id="887412"/>
<dbReference type="KEGG" id="mtu:Rv3396c"/>
<dbReference type="KEGG" id="mtv:RVBD_3396c"/>
<dbReference type="PATRIC" id="fig|83332.111.peg.3785"/>
<dbReference type="TubercuList" id="Rv3396c"/>
<dbReference type="eggNOG" id="COG0518">
    <property type="taxonomic scope" value="Bacteria"/>
</dbReference>
<dbReference type="eggNOG" id="COG0519">
    <property type="taxonomic scope" value="Bacteria"/>
</dbReference>
<dbReference type="InParanoid" id="P9WMS7"/>
<dbReference type="OrthoDB" id="9802219at2"/>
<dbReference type="PhylomeDB" id="P9WMS7"/>
<dbReference type="UniPathway" id="UPA00189">
    <property type="reaction ID" value="UER00296"/>
</dbReference>
<dbReference type="Proteomes" id="UP000001584">
    <property type="component" value="Chromosome"/>
</dbReference>
<dbReference type="GO" id="GO:0005829">
    <property type="term" value="C:cytosol"/>
    <property type="evidence" value="ECO:0000318"/>
    <property type="project" value="GO_Central"/>
</dbReference>
<dbReference type="GO" id="GO:0009274">
    <property type="term" value="C:peptidoglycan-based cell wall"/>
    <property type="evidence" value="ECO:0007005"/>
    <property type="project" value="MTBBASE"/>
</dbReference>
<dbReference type="GO" id="GO:0005524">
    <property type="term" value="F:ATP binding"/>
    <property type="evidence" value="ECO:0007669"/>
    <property type="project" value="UniProtKB-UniRule"/>
</dbReference>
<dbReference type="GO" id="GO:0003921">
    <property type="term" value="F:GMP synthase activity"/>
    <property type="evidence" value="ECO:0000318"/>
    <property type="project" value="GO_Central"/>
</dbReference>
<dbReference type="GO" id="GO:0006177">
    <property type="term" value="P:GMP biosynthetic process"/>
    <property type="evidence" value="ECO:0000318"/>
    <property type="project" value="GO_Central"/>
</dbReference>
<dbReference type="CDD" id="cd01742">
    <property type="entry name" value="GATase1_GMP_Synthase"/>
    <property type="match status" value="1"/>
</dbReference>
<dbReference type="CDD" id="cd01997">
    <property type="entry name" value="GMP_synthase_C"/>
    <property type="match status" value="1"/>
</dbReference>
<dbReference type="FunFam" id="3.30.300.10:FF:000002">
    <property type="entry name" value="GMP synthase [glutamine-hydrolyzing]"/>
    <property type="match status" value="1"/>
</dbReference>
<dbReference type="FunFam" id="3.40.50.620:FF:000001">
    <property type="entry name" value="GMP synthase [glutamine-hydrolyzing]"/>
    <property type="match status" value="1"/>
</dbReference>
<dbReference type="FunFam" id="3.40.50.880:FF:000001">
    <property type="entry name" value="GMP synthase [glutamine-hydrolyzing]"/>
    <property type="match status" value="1"/>
</dbReference>
<dbReference type="Gene3D" id="3.30.300.10">
    <property type="match status" value="1"/>
</dbReference>
<dbReference type="Gene3D" id="3.40.50.880">
    <property type="match status" value="1"/>
</dbReference>
<dbReference type="Gene3D" id="3.40.50.620">
    <property type="entry name" value="HUPs"/>
    <property type="match status" value="1"/>
</dbReference>
<dbReference type="HAMAP" id="MF_00344">
    <property type="entry name" value="GMP_synthase"/>
    <property type="match status" value="1"/>
</dbReference>
<dbReference type="InterPro" id="IPR029062">
    <property type="entry name" value="Class_I_gatase-like"/>
</dbReference>
<dbReference type="InterPro" id="IPR017926">
    <property type="entry name" value="GATASE"/>
</dbReference>
<dbReference type="InterPro" id="IPR001674">
    <property type="entry name" value="GMP_synth_C"/>
</dbReference>
<dbReference type="InterPro" id="IPR004739">
    <property type="entry name" value="GMP_synth_GATase"/>
</dbReference>
<dbReference type="InterPro" id="IPR022955">
    <property type="entry name" value="GMP_synthase"/>
</dbReference>
<dbReference type="InterPro" id="IPR025777">
    <property type="entry name" value="GMPS_ATP_PPase_dom"/>
</dbReference>
<dbReference type="InterPro" id="IPR022310">
    <property type="entry name" value="NAD/GMP_synthase"/>
</dbReference>
<dbReference type="InterPro" id="IPR014729">
    <property type="entry name" value="Rossmann-like_a/b/a_fold"/>
</dbReference>
<dbReference type="NCBIfam" id="TIGR00884">
    <property type="entry name" value="guaA_Cterm"/>
    <property type="match status" value="1"/>
</dbReference>
<dbReference type="NCBIfam" id="TIGR00888">
    <property type="entry name" value="guaA_Nterm"/>
    <property type="match status" value="1"/>
</dbReference>
<dbReference type="NCBIfam" id="NF000848">
    <property type="entry name" value="PRK00074.1"/>
    <property type="match status" value="1"/>
</dbReference>
<dbReference type="PANTHER" id="PTHR11922:SF2">
    <property type="entry name" value="GMP SYNTHASE [GLUTAMINE-HYDROLYZING]"/>
    <property type="match status" value="1"/>
</dbReference>
<dbReference type="PANTHER" id="PTHR11922">
    <property type="entry name" value="GMP SYNTHASE-RELATED"/>
    <property type="match status" value="1"/>
</dbReference>
<dbReference type="Pfam" id="PF00117">
    <property type="entry name" value="GATase"/>
    <property type="match status" value="1"/>
</dbReference>
<dbReference type="Pfam" id="PF00958">
    <property type="entry name" value="GMP_synt_C"/>
    <property type="match status" value="1"/>
</dbReference>
<dbReference type="Pfam" id="PF02540">
    <property type="entry name" value="NAD_synthase"/>
    <property type="match status" value="1"/>
</dbReference>
<dbReference type="PRINTS" id="PR00097">
    <property type="entry name" value="ANTSNTHASEII"/>
</dbReference>
<dbReference type="PRINTS" id="PR00099">
    <property type="entry name" value="CPSGATASE"/>
</dbReference>
<dbReference type="PRINTS" id="PR00096">
    <property type="entry name" value="GATASE"/>
</dbReference>
<dbReference type="SUPFAM" id="SSF52402">
    <property type="entry name" value="Adenine nucleotide alpha hydrolases-like"/>
    <property type="match status" value="1"/>
</dbReference>
<dbReference type="SUPFAM" id="SSF52317">
    <property type="entry name" value="Class I glutamine amidotransferase-like"/>
    <property type="match status" value="1"/>
</dbReference>
<dbReference type="SUPFAM" id="SSF54810">
    <property type="entry name" value="GMP synthetase C-terminal dimerisation domain"/>
    <property type="match status" value="1"/>
</dbReference>
<dbReference type="PROSITE" id="PS51273">
    <property type="entry name" value="GATASE_TYPE_1"/>
    <property type="match status" value="1"/>
</dbReference>
<dbReference type="PROSITE" id="PS51553">
    <property type="entry name" value="GMPS_ATP_PPASE"/>
    <property type="match status" value="1"/>
</dbReference>
<evidence type="ECO:0000250" key="1"/>
<evidence type="ECO:0000269" key="2">
    <source>
    </source>
</evidence>
<evidence type="ECO:0007744" key="3">
    <source>
    </source>
</evidence>
<reference key="1">
    <citation type="journal article" date="1998" name="Nature">
        <title>Deciphering the biology of Mycobacterium tuberculosis from the complete genome sequence.</title>
        <authorList>
            <person name="Cole S.T."/>
            <person name="Brosch R."/>
            <person name="Parkhill J."/>
            <person name="Garnier T."/>
            <person name="Churcher C.M."/>
            <person name="Harris D.E."/>
            <person name="Gordon S.V."/>
            <person name="Eiglmeier K."/>
            <person name="Gas S."/>
            <person name="Barry C.E. III"/>
            <person name="Tekaia F."/>
            <person name="Badcock K."/>
            <person name="Basham D."/>
            <person name="Brown D."/>
            <person name="Chillingworth T."/>
            <person name="Connor R."/>
            <person name="Davies R.M."/>
            <person name="Devlin K."/>
            <person name="Feltwell T."/>
            <person name="Gentles S."/>
            <person name="Hamlin N."/>
            <person name="Holroyd S."/>
            <person name="Hornsby T."/>
            <person name="Jagels K."/>
            <person name="Krogh A."/>
            <person name="McLean J."/>
            <person name="Moule S."/>
            <person name="Murphy L.D."/>
            <person name="Oliver S."/>
            <person name="Osborne J."/>
            <person name="Quail M.A."/>
            <person name="Rajandream M.A."/>
            <person name="Rogers J."/>
            <person name="Rutter S."/>
            <person name="Seeger K."/>
            <person name="Skelton S."/>
            <person name="Squares S."/>
            <person name="Squares R."/>
            <person name="Sulston J.E."/>
            <person name="Taylor K."/>
            <person name="Whitehead S."/>
            <person name="Barrell B.G."/>
        </authorList>
    </citation>
    <scope>NUCLEOTIDE SEQUENCE [LARGE SCALE GENOMIC DNA]</scope>
    <source>
        <strain>ATCC 25618 / H37Rv</strain>
    </source>
</reference>
<reference key="2">
    <citation type="journal article" date="2011" name="Mol. Cell. Proteomics">
        <title>Proteogenomic analysis of Mycobacterium tuberculosis by high resolution mass spectrometry.</title>
        <authorList>
            <person name="Kelkar D.S."/>
            <person name="Kumar D."/>
            <person name="Kumar P."/>
            <person name="Balakrishnan L."/>
            <person name="Muthusamy B."/>
            <person name="Yadav A.K."/>
            <person name="Shrivastava P."/>
            <person name="Marimuthu A."/>
            <person name="Anand S."/>
            <person name="Sundaram H."/>
            <person name="Kingsbury R."/>
            <person name="Harsha H.C."/>
            <person name="Nair B."/>
            <person name="Prasad T.S."/>
            <person name="Chauhan D.S."/>
            <person name="Katoch K."/>
            <person name="Katoch V.M."/>
            <person name="Kumar P."/>
            <person name="Chaerkady R."/>
            <person name="Ramachandran S."/>
            <person name="Dash D."/>
            <person name="Pandey A."/>
        </authorList>
    </citation>
    <scope>ACETYLATION [LARGE SCALE ANALYSIS] AT VAL-2</scope>
    <scope>CLEAVAGE OF INITIATOR METHIONINE [LARGE SCALE ANALYSIS]</scope>
    <scope>IDENTIFICATION BY MASS SPECTROMETRY [LARGE SCALE ANALYSIS]</scope>
    <source>
        <strain>ATCC 25618 / H37Rv</strain>
    </source>
</reference>
<reference key="3">
    <citation type="journal article" date="2012" name="Arch. Biochem. Biophys.">
        <title>Biochemical characterization of recombinant guaA-encoded guanosine monophosphate synthetase (EC 6.3.5.2) from Mycobacterium tuberculosis H37Rv strain.</title>
        <authorList>
            <person name="Franco T.M."/>
            <person name="Rostirolla D.C."/>
            <person name="Ducati R.G."/>
            <person name="Lorenzini D.M."/>
            <person name="Basso L.A."/>
            <person name="Santos D.S."/>
        </authorList>
    </citation>
    <scope>FUNCTION</scope>
    <scope>CATALYTIC ACTIVITY</scope>
    <scope>BIOPHYSICOCHEMICAL PROPERTIES</scope>
    <scope>SUBUNIT</scope>
    <scope>MASS SPECTROMETRY</scope>
    <source>
        <strain>ATCC 25618 / H37Rv</strain>
    </source>
</reference>
<feature type="initiator methionine" description="Removed" evidence="3">
    <location>
        <position position="1"/>
    </location>
</feature>
<feature type="chain" id="PRO_0000140149" description="GMP synthase [glutamine-hydrolyzing]">
    <location>
        <begin position="2"/>
        <end position="525"/>
    </location>
</feature>
<feature type="domain" description="Glutamine amidotransferase type-1">
    <location>
        <begin position="16"/>
        <end position="205"/>
    </location>
</feature>
<feature type="domain" description="GMPS ATP-PPase">
    <location>
        <begin position="206"/>
        <end position="399"/>
    </location>
</feature>
<feature type="active site" description="Nucleophile" evidence="1">
    <location>
        <position position="93"/>
    </location>
</feature>
<feature type="active site" evidence="1">
    <location>
        <position position="179"/>
    </location>
</feature>
<feature type="active site" evidence="1">
    <location>
        <position position="181"/>
    </location>
</feature>
<feature type="binding site" evidence="1">
    <location>
        <begin position="233"/>
        <end position="239"/>
    </location>
    <ligand>
        <name>ATP</name>
        <dbReference type="ChEBI" id="CHEBI:30616"/>
    </ligand>
</feature>
<feature type="modified residue" description="N-acetylvaline" evidence="3">
    <location>
        <position position="2"/>
    </location>
</feature>
<gene>
    <name type="primary">guaA</name>
    <name type="ordered locus">Rv3396c</name>
    <name type="ORF">MTCY78.32</name>
</gene>
<comment type="function">
    <text evidence="2">Catalyzes the synthesis of GMP from XMP.</text>
</comment>
<comment type="catalytic activity">
    <reaction evidence="2">
        <text>XMP + L-glutamine + ATP + H2O = GMP + L-glutamate + AMP + diphosphate + 2 H(+)</text>
        <dbReference type="Rhea" id="RHEA:11680"/>
        <dbReference type="ChEBI" id="CHEBI:15377"/>
        <dbReference type="ChEBI" id="CHEBI:15378"/>
        <dbReference type="ChEBI" id="CHEBI:29985"/>
        <dbReference type="ChEBI" id="CHEBI:30616"/>
        <dbReference type="ChEBI" id="CHEBI:33019"/>
        <dbReference type="ChEBI" id="CHEBI:57464"/>
        <dbReference type="ChEBI" id="CHEBI:58115"/>
        <dbReference type="ChEBI" id="CHEBI:58359"/>
        <dbReference type="ChEBI" id="CHEBI:456215"/>
        <dbReference type="EC" id="6.3.5.2"/>
    </reaction>
</comment>
<comment type="biophysicochemical properties">
    <kinetics>
        <KM evidence="2">1.24 mM for glutamine</KM>
        <KM evidence="2">27 uM for ATP</KM>
        <Vmax evidence="2">2.49 umol/min/mg enzyme toward XMP (at 40 degrees Celsius)</Vmax>
        <Vmax evidence="2">2.58 umol/min/mg enzyme toward ATP (at 40 degrees Celsius)</Vmax>
        <Vmax evidence="2">3.3 umol/min/mg enzyme toward glutamine (at 40 degrees Celsius)</Vmax>
        <text>kcat is 2.3 sec(-1) for XMP. kcat is 2.39 sec(-1) for ATP. kcat is 3.05 sec(-1) for glutamine.</text>
    </kinetics>
    <phDependence>
        <text evidence="2">Optimum pH is 7.5.</text>
    </phDependence>
    <temperatureDependence>
        <text evidence="2">Optimum temperature is 40 degrees Celsius.</text>
    </temperatureDependence>
</comment>
<comment type="pathway">
    <text>Purine metabolism; GMP biosynthesis; GMP from XMP (L-Gln route): step 1/1.</text>
</comment>
<comment type="subunit">
    <text evidence="2">Homodimer.</text>
</comment>
<comment type="mass spectrometry" mass="55928.0" method="Unknown" evidence="2"/>
<organism>
    <name type="scientific">Mycobacterium tuberculosis (strain ATCC 25618 / H37Rv)</name>
    <dbReference type="NCBI Taxonomy" id="83332"/>
    <lineage>
        <taxon>Bacteria</taxon>
        <taxon>Bacillati</taxon>
        <taxon>Actinomycetota</taxon>
        <taxon>Actinomycetes</taxon>
        <taxon>Mycobacteriales</taxon>
        <taxon>Mycobacteriaceae</taxon>
        <taxon>Mycobacterium</taxon>
        <taxon>Mycobacterium tuberculosis complex</taxon>
    </lineage>
</organism>
<proteinExistence type="evidence at protein level"/>
<accession>P9WMS7</accession>
<accession>L0TCE7</accession>
<accession>P0A5A1</accession>
<accession>Q50729</accession>
<name>GUAA_MYCTU</name>
<keyword id="KW-0007">Acetylation</keyword>
<keyword id="KW-0067">ATP-binding</keyword>
<keyword id="KW-0315">Glutamine amidotransferase</keyword>
<keyword id="KW-0332">GMP biosynthesis</keyword>
<keyword id="KW-0436">Ligase</keyword>
<keyword id="KW-0547">Nucleotide-binding</keyword>
<keyword id="KW-0658">Purine biosynthesis</keyword>
<keyword id="KW-1185">Reference proteome</keyword>